<dbReference type="EC" id="1.2.1.3"/>
<dbReference type="EMBL" id="BA000017">
    <property type="protein sequence ID" value="BAB56329.1"/>
    <property type="molecule type" value="Genomic_DNA"/>
</dbReference>
<dbReference type="RefSeq" id="WP_000290397.1">
    <property type="nucleotide sequence ID" value="NC_002758.2"/>
</dbReference>
<dbReference type="SMR" id="Q99X54"/>
<dbReference type="KEGG" id="sav:SAV0167"/>
<dbReference type="HOGENOM" id="CLU_005391_0_2_9"/>
<dbReference type="PhylomeDB" id="Q99X54"/>
<dbReference type="Proteomes" id="UP000002481">
    <property type="component" value="Chromosome"/>
</dbReference>
<dbReference type="GO" id="GO:0004029">
    <property type="term" value="F:aldehyde dehydrogenase (NAD+) activity"/>
    <property type="evidence" value="ECO:0007669"/>
    <property type="project" value="UniProtKB-EC"/>
</dbReference>
<dbReference type="CDD" id="cd07117">
    <property type="entry name" value="ALDH_StaphAldA1"/>
    <property type="match status" value="1"/>
</dbReference>
<dbReference type="FunFam" id="3.40.309.10:FF:000012">
    <property type="entry name" value="Betaine aldehyde dehydrogenase"/>
    <property type="match status" value="1"/>
</dbReference>
<dbReference type="FunFam" id="3.40.605.10:FF:000007">
    <property type="entry name" value="NAD/NADP-dependent betaine aldehyde dehydrogenase"/>
    <property type="match status" value="1"/>
</dbReference>
<dbReference type="Gene3D" id="3.40.605.10">
    <property type="entry name" value="Aldehyde Dehydrogenase, Chain A, domain 1"/>
    <property type="match status" value="1"/>
</dbReference>
<dbReference type="Gene3D" id="3.40.309.10">
    <property type="entry name" value="Aldehyde Dehydrogenase, Chain A, domain 2"/>
    <property type="match status" value="1"/>
</dbReference>
<dbReference type="InterPro" id="IPR016161">
    <property type="entry name" value="Ald_DH/histidinol_DH"/>
</dbReference>
<dbReference type="InterPro" id="IPR016163">
    <property type="entry name" value="Ald_DH_C"/>
</dbReference>
<dbReference type="InterPro" id="IPR016160">
    <property type="entry name" value="Ald_DH_CS_CYS"/>
</dbReference>
<dbReference type="InterPro" id="IPR029510">
    <property type="entry name" value="Ald_DH_CS_GLU"/>
</dbReference>
<dbReference type="InterPro" id="IPR016162">
    <property type="entry name" value="Ald_DH_N"/>
</dbReference>
<dbReference type="InterPro" id="IPR015590">
    <property type="entry name" value="Aldehyde_DH_dom"/>
</dbReference>
<dbReference type="PANTHER" id="PTHR43111">
    <property type="entry name" value="ALDEHYDE DEHYDROGENASE B-RELATED"/>
    <property type="match status" value="1"/>
</dbReference>
<dbReference type="PANTHER" id="PTHR43111:SF1">
    <property type="entry name" value="ALDEHYDE DEHYDROGENASE B-RELATED"/>
    <property type="match status" value="1"/>
</dbReference>
<dbReference type="Pfam" id="PF00171">
    <property type="entry name" value="Aldedh"/>
    <property type="match status" value="1"/>
</dbReference>
<dbReference type="SUPFAM" id="SSF53720">
    <property type="entry name" value="ALDH-like"/>
    <property type="match status" value="1"/>
</dbReference>
<dbReference type="PROSITE" id="PS00070">
    <property type="entry name" value="ALDEHYDE_DEHYDR_CYS"/>
    <property type="match status" value="1"/>
</dbReference>
<dbReference type="PROSITE" id="PS00687">
    <property type="entry name" value="ALDEHYDE_DEHYDR_GLU"/>
    <property type="match status" value="1"/>
</dbReference>
<evidence type="ECO:0000250" key="1"/>
<evidence type="ECO:0000305" key="2"/>
<sequence length="495" mass="53660">MAVNVRDYIAENYGLFINGEFVKGSSDETIEVTNPATGETLSHITRAKDKDVDHAVKVAQEAFESWSLTSKSERAQMLRDIGDKLMAQKDKIAMIETLNNGKPIRETTAIDIPFAARHFHYFASVIETEEGTVNDIDKDTMSIVRHEPIGVVGAVVAWNFPMLLAAWKIAPAIAAGNTIVIQPSSSTPLSLLEVAKIFQEVLPKGVVNILTGKGSESGNAIFNHDGVDKLSFTGSTDVGYQVAEAAAKHLVPATLELGGKSANIILDDANLDLAVEGIQLGILFNQGEVCSAGSRLLVHEKIYDQLVPRLQEAFSNIKVGDPQDEATQMGSQTGKDQLDKIQSYIDAAKESDAQILAGGHRLTENGLDKGFFFEPTLIAVPDNHHKLAQEEIFGPVLTVIKVKDDQEAIDIANDSEYGLAGGVFSQNITRALNIAKAVRTGRIWINTYNQVPEGAPFGGYKKSGIGRETYKGALSNYQQVKNIYIDTSNALKGLY</sequence>
<organism>
    <name type="scientific">Staphylococcus aureus (strain Mu50 / ATCC 700699)</name>
    <dbReference type="NCBI Taxonomy" id="158878"/>
    <lineage>
        <taxon>Bacteria</taxon>
        <taxon>Bacillati</taxon>
        <taxon>Bacillota</taxon>
        <taxon>Bacilli</taxon>
        <taxon>Bacillales</taxon>
        <taxon>Staphylococcaceae</taxon>
        <taxon>Staphylococcus</taxon>
    </lineage>
</organism>
<reference key="1">
    <citation type="journal article" date="2001" name="Lancet">
        <title>Whole genome sequencing of meticillin-resistant Staphylococcus aureus.</title>
        <authorList>
            <person name="Kuroda M."/>
            <person name="Ohta T."/>
            <person name="Uchiyama I."/>
            <person name="Baba T."/>
            <person name="Yuzawa H."/>
            <person name="Kobayashi I."/>
            <person name="Cui L."/>
            <person name="Oguchi A."/>
            <person name="Aoki K."/>
            <person name="Nagai Y."/>
            <person name="Lian J.-Q."/>
            <person name="Ito T."/>
            <person name="Kanamori M."/>
            <person name="Matsumaru H."/>
            <person name="Maruyama A."/>
            <person name="Murakami H."/>
            <person name="Hosoyama A."/>
            <person name="Mizutani-Ui Y."/>
            <person name="Takahashi N.K."/>
            <person name="Sawano T."/>
            <person name="Inoue R."/>
            <person name="Kaito C."/>
            <person name="Sekimizu K."/>
            <person name="Hirakawa H."/>
            <person name="Kuhara S."/>
            <person name="Goto S."/>
            <person name="Yabuzaki J."/>
            <person name="Kanehisa M."/>
            <person name="Yamashita A."/>
            <person name="Oshima K."/>
            <person name="Furuya K."/>
            <person name="Yoshino C."/>
            <person name="Shiba T."/>
            <person name="Hattori M."/>
            <person name="Ogasawara N."/>
            <person name="Hayashi H."/>
            <person name="Hiramatsu K."/>
        </authorList>
    </citation>
    <scope>NUCLEOTIDE SEQUENCE [LARGE SCALE GENOMIC DNA]</scope>
    <source>
        <strain>Mu50 / ATCC 700699</strain>
    </source>
</reference>
<feature type="chain" id="PRO_0000056456" description="Putative aldehyde dehydrogenase AldA">
    <location>
        <begin position="1"/>
        <end position="495"/>
    </location>
</feature>
<feature type="active site" evidence="1">
    <location>
        <position position="256"/>
    </location>
</feature>
<feature type="active site" evidence="1">
    <location>
        <position position="290"/>
    </location>
</feature>
<feature type="binding site" evidence="1">
    <location>
        <begin position="212"/>
        <end position="218"/>
    </location>
    <ligand>
        <name>NAD(+)</name>
        <dbReference type="ChEBI" id="CHEBI:57540"/>
    </ligand>
</feature>
<name>ALDA_STAAM</name>
<proteinExistence type="inferred from homology"/>
<comment type="catalytic activity">
    <reaction>
        <text>an aldehyde + NAD(+) + H2O = a carboxylate + NADH + 2 H(+)</text>
        <dbReference type="Rhea" id="RHEA:16185"/>
        <dbReference type="ChEBI" id="CHEBI:15377"/>
        <dbReference type="ChEBI" id="CHEBI:15378"/>
        <dbReference type="ChEBI" id="CHEBI:17478"/>
        <dbReference type="ChEBI" id="CHEBI:29067"/>
        <dbReference type="ChEBI" id="CHEBI:57540"/>
        <dbReference type="ChEBI" id="CHEBI:57945"/>
        <dbReference type="EC" id="1.2.1.3"/>
    </reaction>
</comment>
<comment type="similarity">
    <text evidence="2">Belongs to the aldehyde dehydrogenase family.</text>
</comment>
<gene>
    <name type="primary">aldA</name>
    <name type="ordered locus">SAV0167</name>
</gene>
<keyword id="KW-0520">NAD</keyword>
<keyword id="KW-0560">Oxidoreductase</keyword>
<accession>Q99X54</accession>
<protein>
    <recommendedName>
        <fullName>Putative aldehyde dehydrogenase AldA</fullName>
        <ecNumber>1.2.1.3</ecNumber>
    </recommendedName>
</protein>